<dbReference type="EMBL" id="BX908798">
    <property type="protein sequence ID" value="CAF23150.1"/>
    <property type="status" value="ALT_INIT"/>
    <property type="molecule type" value="Genomic_DNA"/>
</dbReference>
<dbReference type="RefSeq" id="WP_042281442.1">
    <property type="nucleotide sequence ID" value="NC_005861.2"/>
</dbReference>
<dbReference type="SMR" id="Q6ME49"/>
<dbReference type="STRING" id="264201.pc0426"/>
<dbReference type="eggNOG" id="COG0097">
    <property type="taxonomic scope" value="Bacteria"/>
</dbReference>
<dbReference type="HOGENOM" id="CLU_065464_1_2_0"/>
<dbReference type="OrthoDB" id="9805007at2"/>
<dbReference type="Proteomes" id="UP000000529">
    <property type="component" value="Chromosome"/>
</dbReference>
<dbReference type="GO" id="GO:0022625">
    <property type="term" value="C:cytosolic large ribosomal subunit"/>
    <property type="evidence" value="ECO:0007669"/>
    <property type="project" value="TreeGrafter"/>
</dbReference>
<dbReference type="GO" id="GO:0019843">
    <property type="term" value="F:rRNA binding"/>
    <property type="evidence" value="ECO:0007669"/>
    <property type="project" value="UniProtKB-UniRule"/>
</dbReference>
<dbReference type="GO" id="GO:0003735">
    <property type="term" value="F:structural constituent of ribosome"/>
    <property type="evidence" value="ECO:0007669"/>
    <property type="project" value="InterPro"/>
</dbReference>
<dbReference type="GO" id="GO:0002181">
    <property type="term" value="P:cytoplasmic translation"/>
    <property type="evidence" value="ECO:0007669"/>
    <property type="project" value="TreeGrafter"/>
</dbReference>
<dbReference type="FunFam" id="3.90.930.12:FF:000001">
    <property type="entry name" value="50S ribosomal protein L6"/>
    <property type="match status" value="1"/>
</dbReference>
<dbReference type="FunFam" id="3.90.930.12:FF:000002">
    <property type="entry name" value="50S ribosomal protein L6"/>
    <property type="match status" value="1"/>
</dbReference>
<dbReference type="Gene3D" id="3.90.930.12">
    <property type="entry name" value="Ribosomal protein L6, alpha-beta domain"/>
    <property type="match status" value="2"/>
</dbReference>
<dbReference type="HAMAP" id="MF_01365_B">
    <property type="entry name" value="Ribosomal_uL6_B"/>
    <property type="match status" value="1"/>
</dbReference>
<dbReference type="InterPro" id="IPR000702">
    <property type="entry name" value="Ribosomal_uL6-like"/>
</dbReference>
<dbReference type="InterPro" id="IPR036789">
    <property type="entry name" value="Ribosomal_uL6-like_a/b-dom_sf"/>
</dbReference>
<dbReference type="InterPro" id="IPR020040">
    <property type="entry name" value="Ribosomal_uL6_a/b-dom"/>
</dbReference>
<dbReference type="InterPro" id="IPR019906">
    <property type="entry name" value="Ribosomal_uL6_bac-type"/>
</dbReference>
<dbReference type="NCBIfam" id="TIGR03654">
    <property type="entry name" value="L6_bact"/>
    <property type="match status" value="1"/>
</dbReference>
<dbReference type="PANTHER" id="PTHR11655">
    <property type="entry name" value="60S/50S RIBOSOMAL PROTEIN L6/L9"/>
    <property type="match status" value="1"/>
</dbReference>
<dbReference type="PANTHER" id="PTHR11655:SF14">
    <property type="entry name" value="LARGE RIBOSOMAL SUBUNIT PROTEIN UL6M"/>
    <property type="match status" value="1"/>
</dbReference>
<dbReference type="Pfam" id="PF00347">
    <property type="entry name" value="Ribosomal_L6"/>
    <property type="match status" value="2"/>
</dbReference>
<dbReference type="PIRSF" id="PIRSF002162">
    <property type="entry name" value="Ribosomal_L6"/>
    <property type="match status" value="1"/>
</dbReference>
<dbReference type="PRINTS" id="PR00059">
    <property type="entry name" value="RIBOSOMALL6"/>
</dbReference>
<dbReference type="SUPFAM" id="SSF56053">
    <property type="entry name" value="Ribosomal protein L6"/>
    <property type="match status" value="2"/>
</dbReference>
<keyword id="KW-1185">Reference proteome</keyword>
<keyword id="KW-0687">Ribonucleoprotein</keyword>
<keyword id="KW-0689">Ribosomal protein</keyword>
<keyword id="KW-0694">RNA-binding</keyword>
<keyword id="KW-0699">rRNA-binding</keyword>
<reference key="1">
    <citation type="journal article" date="2004" name="Science">
        <title>Illuminating the evolutionary history of chlamydiae.</title>
        <authorList>
            <person name="Horn M."/>
            <person name="Collingro A."/>
            <person name="Schmitz-Esser S."/>
            <person name="Beier C.L."/>
            <person name="Purkhold U."/>
            <person name="Fartmann B."/>
            <person name="Brandt P."/>
            <person name="Nyakatura G.J."/>
            <person name="Droege M."/>
            <person name="Frishman D."/>
            <person name="Rattei T."/>
            <person name="Mewes H.-W."/>
            <person name="Wagner M."/>
        </authorList>
    </citation>
    <scope>NUCLEOTIDE SEQUENCE [LARGE SCALE GENOMIC DNA]</scope>
    <source>
        <strain>UWE25</strain>
    </source>
</reference>
<organism>
    <name type="scientific">Protochlamydia amoebophila (strain UWE25)</name>
    <dbReference type="NCBI Taxonomy" id="264201"/>
    <lineage>
        <taxon>Bacteria</taxon>
        <taxon>Pseudomonadati</taxon>
        <taxon>Chlamydiota</taxon>
        <taxon>Chlamydiia</taxon>
        <taxon>Parachlamydiales</taxon>
        <taxon>Parachlamydiaceae</taxon>
        <taxon>Candidatus Protochlamydia</taxon>
    </lineage>
</organism>
<gene>
    <name evidence="1" type="primary">rplF</name>
    <name type="ordered locus">pc0426</name>
</gene>
<evidence type="ECO:0000255" key="1">
    <source>
        <dbReference type="HAMAP-Rule" id="MF_01365"/>
    </source>
</evidence>
<evidence type="ECO:0000305" key="2"/>
<sequence length="180" mass="19379">MSRKGKLPISLPNGVEVKVSNTEVAVKGPKGALTQKLIPGVNVNVEGNEVLVSLADEEAKLAHFHGLYRTLIHNMVVGTTEGFEKKLEMIGVGYRAAVQGDLLDLQLGFSHPCKLPIPKGLAVKVDKNTLITISGFDKHLVGQFAATVRSQRPPEPYQGKGIRYAGEFVRKKAGKAAAKK</sequence>
<accession>Q6ME49</accession>
<protein>
    <recommendedName>
        <fullName evidence="1">Large ribosomal subunit protein uL6</fullName>
    </recommendedName>
    <alternativeName>
        <fullName evidence="2">50S ribosomal protein L6</fullName>
    </alternativeName>
</protein>
<name>RL6_PARUW</name>
<feature type="chain" id="PRO_0000265275" description="Large ribosomal subunit protein uL6">
    <location>
        <begin position="1"/>
        <end position="180"/>
    </location>
</feature>
<comment type="function">
    <text evidence="1">This protein binds to the 23S rRNA, and is important in its secondary structure. It is located near the subunit interface in the base of the L7/L12 stalk, and near the tRNA binding site of the peptidyltransferase center.</text>
</comment>
<comment type="subunit">
    <text evidence="1">Part of the 50S ribosomal subunit.</text>
</comment>
<comment type="similarity">
    <text evidence="1">Belongs to the universal ribosomal protein uL6 family.</text>
</comment>
<comment type="sequence caution" evidence="2">
    <conflict type="erroneous initiation">
        <sequence resource="EMBL-CDS" id="CAF23150"/>
    </conflict>
</comment>
<proteinExistence type="inferred from homology"/>